<dbReference type="EC" id="6.1.1.22" evidence="1"/>
<dbReference type="EMBL" id="AE017340">
    <property type="protein sequence ID" value="AAV82167.1"/>
    <property type="molecule type" value="Genomic_DNA"/>
</dbReference>
<dbReference type="RefSeq" id="WP_011234573.1">
    <property type="nucleotide sequence ID" value="NC_006512.1"/>
</dbReference>
<dbReference type="SMR" id="Q5QZ13"/>
<dbReference type="STRING" id="283942.IL1327"/>
<dbReference type="GeneID" id="41336503"/>
<dbReference type="KEGG" id="ilo:IL1327"/>
<dbReference type="eggNOG" id="COG0017">
    <property type="taxonomic scope" value="Bacteria"/>
</dbReference>
<dbReference type="HOGENOM" id="CLU_004553_2_0_6"/>
<dbReference type="OrthoDB" id="9762036at2"/>
<dbReference type="Proteomes" id="UP000001171">
    <property type="component" value="Chromosome"/>
</dbReference>
<dbReference type="GO" id="GO:0005737">
    <property type="term" value="C:cytoplasm"/>
    <property type="evidence" value="ECO:0007669"/>
    <property type="project" value="UniProtKB-SubCell"/>
</dbReference>
<dbReference type="GO" id="GO:0004816">
    <property type="term" value="F:asparagine-tRNA ligase activity"/>
    <property type="evidence" value="ECO:0007669"/>
    <property type="project" value="UniProtKB-UniRule"/>
</dbReference>
<dbReference type="GO" id="GO:0005524">
    <property type="term" value="F:ATP binding"/>
    <property type="evidence" value="ECO:0007669"/>
    <property type="project" value="UniProtKB-UniRule"/>
</dbReference>
<dbReference type="GO" id="GO:0003676">
    <property type="term" value="F:nucleic acid binding"/>
    <property type="evidence" value="ECO:0007669"/>
    <property type="project" value="InterPro"/>
</dbReference>
<dbReference type="GO" id="GO:0006421">
    <property type="term" value="P:asparaginyl-tRNA aminoacylation"/>
    <property type="evidence" value="ECO:0007669"/>
    <property type="project" value="UniProtKB-UniRule"/>
</dbReference>
<dbReference type="CDD" id="cd00776">
    <property type="entry name" value="AsxRS_core"/>
    <property type="match status" value="1"/>
</dbReference>
<dbReference type="CDD" id="cd04318">
    <property type="entry name" value="EcAsnRS_like_N"/>
    <property type="match status" value="1"/>
</dbReference>
<dbReference type="FunFam" id="3.30.930.10:FF:000016">
    <property type="entry name" value="Asparagine--tRNA ligase"/>
    <property type="match status" value="1"/>
</dbReference>
<dbReference type="Gene3D" id="3.30.930.10">
    <property type="entry name" value="Bira Bifunctional Protein, Domain 2"/>
    <property type="match status" value="1"/>
</dbReference>
<dbReference type="Gene3D" id="2.40.50.140">
    <property type="entry name" value="Nucleic acid-binding proteins"/>
    <property type="match status" value="1"/>
</dbReference>
<dbReference type="HAMAP" id="MF_00534">
    <property type="entry name" value="Asn_tRNA_synth"/>
    <property type="match status" value="1"/>
</dbReference>
<dbReference type="InterPro" id="IPR004364">
    <property type="entry name" value="Aa-tRNA-synt_II"/>
</dbReference>
<dbReference type="InterPro" id="IPR006195">
    <property type="entry name" value="aa-tRNA-synth_II"/>
</dbReference>
<dbReference type="InterPro" id="IPR045864">
    <property type="entry name" value="aa-tRNA-synth_II/BPL/LPL"/>
</dbReference>
<dbReference type="InterPro" id="IPR004522">
    <property type="entry name" value="Asn-tRNA-ligase"/>
</dbReference>
<dbReference type="InterPro" id="IPR002312">
    <property type="entry name" value="Asp/Asn-tRNA-synth_IIb"/>
</dbReference>
<dbReference type="InterPro" id="IPR012340">
    <property type="entry name" value="NA-bd_OB-fold"/>
</dbReference>
<dbReference type="InterPro" id="IPR004365">
    <property type="entry name" value="NA-bd_OB_tRNA"/>
</dbReference>
<dbReference type="NCBIfam" id="TIGR00457">
    <property type="entry name" value="asnS"/>
    <property type="match status" value="1"/>
</dbReference>
<dbReference type="NCBIfam" id="NF003037">
    <property type="entry name" value="PRK03932.1"/>
    <property type="match status" value="1"/>
</dbReference>
<dbReference type="PANTHER" id="PTHR22594:SF34">
    <property type="entry name" value="ASPARAGINE--TRNA LIGASE, MITOCHONDRIAL-RELATED"/>
    <property type="match status" value="1"/>
</dbReference>
<dbReference type="PANTHER" id="PTHR22594">
    <property type="entry name" value="ASPARTYL/LYSYL-TRNA SYNTHETASE"/>
    <property type="match status" value="1"/>
</dbReference>
<dbReference type="Pfam" id="PF00152">
    <property type="entry name" value="tRNA-synt_2"/>
    <property type="match status" value="1"/>
</dbReference>
<dbReference type="Pfam" id="PF01336">
    <property type="entry name" value="tRNA_anti-codon"/>
    <property type="match status" value="1"/>
</dbReference>
<dbReference type="PRINTS" id="PR01042">
    <property type="entry name" value="TRNASYNTHASP"/>
</dbReference>
<dbReference type="SUPFAM" id="SSF55681">
    <property type="entry name" value="Class II aaRS and biotin synthetases"/>
    <property type="match status" value="1"/>
</dbReference>
<dbReference type="SUPFAM" id="SSF50249">
    <property type="entry name" value="Nucleic acid-binding proteins"/>
    <property type="match status" value="1"/>
</dbReference>
<dbReference type="PROSITE" id="PS50862">
    <property type="entry name" value="AA_TRNA_LIGASE_II"/>
    <property type="match status" value="1"/>
</dbReference>
<accession>Q5QZ13</accession>
<proteinExistence type="inferred from homology"/>
<reference key="1">
    <citation type="journal article" date="2004" name="Proc. Natl. Acad. Sci. U.S.A.">
        <title>Genome sequence of the deep-sea gamma-proteobacterium Idiomarina loihiensis reveals amino acid fermentation as a source of carbon and energy.</title>
        <authorList>
            <person name="Hou S."/>
            <person name="Saw J.H."/>
            <person name="Lee K.S."/>
            <person name="Freitas T.A."/>
            <person name="Belisle C."/>
            <person name="Kawarabayasi Y."/>
            <person name="Donachie S.P."/>
            <person name="Pikina A."/>
            <person name="Galperin M.Y."/>
            <person name="Koonin E.V."/>
            <person name="Makarova K.S."/>
            <person name="Omelchenko M.V."/>
            <person name="Sorokin A."/>
            <person name="Wolf Y.I."/>
            <person name="Li Q.X."/>
            <person name="Keum Y.S."/>
            <person name="Campbell S."/>
            <person name="Denery J."/>
            <person name="Aizawa S."/>
            <person name="Shibata S."/>
            <person name="Malahoff A."/>
            <person name="Alam M."/>
        </authorList>
    </citation>
    <scope>NUCLEOTIDE SEQUENCE [LARGE SCALE GENOMIC DNA]</scope>
    <source>
        <strain>ATCC BAA-735 / DSM 15497 / L2-TR</strain>
    </source>
</reference>
<protein>
    <recommendedName>
        <fullName evidence="1">Asparagine--tRNA ligase</fullName>
        <ecNumber evidence="1">6.1.1.22</ecNumber>
    </recommendedName>
    <alternativeName>
        <fullName evidence="1">Asparaginyl-tRNA synthetase</fullName>
        <shortName evidence="1">AsnRS</shortName>
    </alternativeName>
</protein>
<comment type="catalytic activity">
    <reaction evidence="1">
        <text>tRNA(Asn) + L-asparagine + ATP = L-asparaginyl-tRNA(Asn) + AMP + diphosphate + H(+)</text>
        <dbReference type="Rhea" id="RHEA:11180"/>
        <dbReference type="Rhea" id="RHEA-COMP:9659"/>
        <dbReference type="Rhea" id="RHEA-COMP:9674"/>
        <dbReference type="ChEBI" id="CHEBI:15378"/>
        <dbReference type="ChEBI" id="CHEBI:30616"/>
        <dbReference type="ChEBI" id="CHEBI:33019"/>
        <dbReference type="ChEBI" id="CHEBI:58048"/>
        <dbReference type="ChEBI" id="CHEBI:78442"/>
        <dbReference type="ChEBI" id="CHEBI:78515"/>
        <dbReference type="ChEBI" id="CHEBI:456215"/>
        <dbReference type="EC" id="6.1.1.22"/>
    </reaction>
</comment>
<comment type="subunit">
    <text evidence="1">Homodimer.</text>
</comment>
<comment type="subcellular location">
    <subcellularLocation>
        <location evidence="1">Cytoplasm</location>
    </subcellularLocation>
</comment>
<comment type="similarity">
    <text evidence="1">Belongs to the class-II aminoacyl-tRNA synthetase family.</text>
</comment>
<evidence type="ECO:0000255" key="1">
    <source>
        <dbReference type="HAMAP-Rule" id="MF_00534"/>
    </source>
</evidence>
<name>SYN_IDILO</name>
<gene>
    <name evidence="1" type="primary">asnS</name>
    <name type="ordered locus">IL1327</name>
</gene>
<feature type="chain" id="PRO_1000051400" description="Asparagine--tRNA ligase">
    <location>
        <begin position="1"/>
        <end position="466"/>
    </location>
</feature>
<organism>
    <name type="scientific">Idiomarina loihiensis (strain ATCC BAA-735 / DSM 15497 / L2-TR)</name>
    <dbReference type="NCBI Taxonomy" id="283942"/>
    <lineage>
        <taxon>Bacteria</taxon>
        <taxon>Pseudomonadati</taxon>
        <taxon>Pseudomonadota</taxon>
        <taxon>Gammaproteobacteria</taxon>
        <taxon>Alteromonadales</taxon>
        <taxon>Idiomarinaceae</taxon>
        <taxon>Idiomarina</taxon>
    </lineage>
</organism>
<sequence length="466" mass="52495">MSYASVVDVLTGKVAVDETVTVRGWVRTRRDSKAGISFINLHDGSCFDAIQAVVPAELPNYSNEVQKLTTGCSVAITGVVVPSQGKGQSFELQATKVHVYGWVEDPDTYPMAPKRHSMEYLREYAHLRPRTNITGAVMRVRNALSQAIHRFFHEEGYLWVSTPIITTSDCEGAGEMFRVSTLDMLNIPKTDKGEVDYSEDFFGKEAFLTVSGQLNVESYACSLSKVYTFGPTFRAENSNTSRHLSEFWMVEPELAFATLDDVAGLAEAMLKYVFKAVLEERPDDMAFFAERINSDAISRLEAIVNNDFVHMDYTDAIEILKNCDRKFEYAVEWGVDLQSEHERYLAEEHVGAPIILKNYPRDIKAFYMRQNEDGKTVAAMDVLAPGIGEIIGGSAREERLDILDQRIDEMNLPKEEYGFYRDLRRYGTVPHAGFGLGFERLVAYVTGVQNIRDVIPFPRAPKSAEF</sequence>
<keyword id="KW-0030">Aminoacyl-tRNA synthetase</keyword>
<keyword id="KW-0067">ATP-binding</keyword>
<keyword id="KW-0963">Cytoplasm</keyword>
<keyword id="KW-0436">Ligase</keyword>
<keyword id="KW-0547">Nucleotide-binding</keyword>
<keyword id="KW-0648">Protein biosynthesis</keyword>
<keyword id="KW-1185">Reference proteome</keyword>